<name>SYDND_CHLPD</name>
<evidence type="ECO:0000255" key="1">
    <source>
        <dbReference type="HAMAP-Rule" id="MF_00044"/>
    </source>
</evidence>
<sequence length="606" mass="68832">MSRAAGSTETLKNRFRTDYCGLLNPEVEHQSVKLGGWVHRKRDHGGLIFIDLRDHTGICQIVIQPEEQQLFAKAEQLHLESVICIEGTVVRRSPGAVNPRIPSGEIEVVAAGISVESSAHPLPFPVADEVQTSEELRLKYRFIDLRRDKIHENIIFRSRLTAAIRRYLEEKSFIEIQTPILTSSSPEGARDFLVPSRLHPGKFYALPQAPQQFKQLLMVSGFPRYFQIAPCFRDEDARADRSPGEFYQLDMEMAFIEQDDLFEILEGMFSHLTGSMSTKRIREFPFPRISFRDVMNRYGTDKPDLRIPLEISDVTHLFLQSSFKVFAANTKEGCCVKAMLVKGRGNESRLFYDKAEKRAKELGSGGLAYIQFREDGPKGPLVKFLSGEELAALRELLGVEVGDVVFFGAGKWEQTCRIMGGMRTYFSDLFTLDRDELAFCWVVDFPMYEYNEDQKKIDFSHNPFSMPQGEMDALESMPPLNILAYQYDIVCNGIELSSGAIRNHRPDIMYKAFEIAGYTKEDVDSRFGHMIEAFKLGAPPHGGIAPGLDRLVMILRDEQNIREVIAFPMNQQAQDLMMGSPSEVTPIQLRELHLQVELPKKAEAKP</sequence>
<proteinExistence type="inferred from homology"/>
<organism>
    <name type="scientific">Chlorobium phaeobacteroides (strain DSM 266 / SMG 266 / 2430)</name>
    <dbReference type="NCBI Taxonomy" id="290317"/>
    <lineage>
        <taxon>Bacteria</taxon>
        <taxon>Pseudomonadati</taxon>
        <taxon>Chlorobiota</taxon>
        <taxon>Chlorobiia</taxon>
        <taxon>Chlorobiales</taxon>
        <taxon>Chlorobiaceae</taxon>
        <taxon>Chlorobium/Pelodictyon group</taxon>
        <taxon>Chlorobium</taxon>
    </lineage>
</organism>
<feature type="chain" id="PRO_1000057300" description="Aspartate--tRNA(Asp/Asn) ligase">
    <location>
        <begin position="1"/>
        <end position="606"/>
    </location>
</feature>
<feature type="region of interest" description="Aspartate" evidence="1">
    <location>
        <begin position="211"/>
        <end position="214"/>
    </location>
</feature>
<feature type="binding site" evidence="1">
    <location>
        <position position="187"/>
    </location>
    <ligand>
        <name>L-aspartate</name>
        <dbReference type="ChEBI" id="CHEBI:29991"/>
    </ligand>
</feature>
<feature type="binding site" evidence="1">
    <location>
        <begin position="233"/>
        <end position="235"/>
    </location>
    <ligand>
        <name>ATP</name>
        <dbReference type="ChEBI" id="CHEBI:30616"/>
    </ligand>
</feature>
<feature type="binding site" evidence="1">
    <location>
        <position position="233"/>
    </location>
    <ligand>
        <name>L-aspartate</name>
        <dbReference type="ChEBI" id="CHEBI:29991"/>
    </ligand>
</feature>
<feature type="binding site" evidence="1">
    <location>
        <position position="461"/>
    </location>
    <ligand>
        <name>L-aspartate</name>
        <dbReference type="ChEBI" id="CHEBI:29991"/>
    </ligand>
</feature>
<feature type="binding site" evidence="1">
    <location>
        <position position="495"/>
    </location>
    <ligand>
        <name>ATP</name>
        <dbReference type="ChEBI" id="CHEBI:30616"/>
    </ligand>
</feature>
<feature type="binding site" evidence="1">
    <location>
        <position position="502"/>
    </location>
    <ligand>
        <name>L-aspartate</name>
        <dbReference type="ChEBI" id="CHEBI:29991"/>
    </ligand>
</feature>
<feature type="binding site" evidence="1">
    <location>
        <begin position="547"/>
        <end position="550"/>
    </location>
    <ligand>
        <name>ATP</name>
        <dbReference type="ChEBI" id="CHEBI:30616"/>
    </ligand>
</feature>
<feature type="site" description="Important for tRNA non-discrimination" evidence="1">
    <location>
        <position position="44"/>
    </location>
</feature>
<feature type="site" description="Important for tRNA non-discrimination" evidence="1">
    <location>
        <position position="95"/>
    </location>
</feature>
<dbReference type="EC" id="6.1.1.23" evidence="1"/>
<dbReference type="EMBL" id="CP000492">
    <property type="protein sequence ID" value="ABL65671.1"/>
    <property type="molecule type" value="Genomic_DNA"/>
</dbReference>
<dbReference type="RefSeq" id="WP_011745481.1">
    <property type="nucleotide sequence ID" value="NC_008639.1"/>
</dbReference>
<dbReference type="SMR" id="A1BGZ4"/>
<dbReference type="STRING" id="290317.Cpha266_1650"/>
<dbReference type="KEGG" id="cph:Cpha266_1650"/>
<dbReference type="eggNOG" id="COG0173">
    <property type="taxonomic scope" value="Bacteria"/>
</dbReference>
<dbReference type="HOGENOM" id="CLU_014330_3_2_10"/>
<dbReference type="OrthoDB" id="9802326at2"/>
<dbReference type="Proteomes" id="UP000008701">
    <property type="component" value="Chromosome"/>
</dbReference>
<dbReference type="GO" id="GO:0005737">
    <property type="term" value="C:cytoplasm"/>
    <property type="evidence" value="ECO:0007669"/>
    <property type="project" value="UniProtKB-SubCell"/>
</dbReference>
<dbReference type="GO" id="GO:0004815">
    <property type="term" value="F:aspartate-tRNA ligase activity"/>
    <property type="evidence" value="ECO:0007669"/>
    <property type="project" value="UniProtKB-UniRule"/>
</dbReference>
<dbReference type="GO" id="GO:0050560">
    <property type="term" value="F:aspartate-tRNA(Asn) ligase activity"/>
    <property type="evidence" value="ECO:0007669"/>
    <property type="project" value="UniProtKB-EC"/>
</dbReference>
<dbReference type="GO" id="GO:0005524">
    <property type="term" value="F:ATP binding"/>
    <property type="evidence" value="ECO:0007669"/>
    <property type="project" value="UniProtKB-UniRule"/>
</dbReference>
<dbReference type="GO" id="GO:0003676">
    <property type="term" value="F:nucleic acid binding"/>
    <property type="evidence" value="ECO:0007669"/>
    <property type="project" value="InterPro"/>
</dbReference>
<dbReference type="GO" id="GO:0006422">
    <property type="term" value="P:aspartyl-tRNA aminoacylation"/>
    <property type="evidence" value="ECO:0007669"/>
    <property type="project" value="UniProtKB-UniRule"/>
</dbReference>
<dbReference type="CDD" id="cd00777">
    <property type="entry name" value="AspRS_core"/>
    <property type="match status" value="1"/>
</dbReference>
<dbReference type="CDD" id="cd04317">
    <property type="entry name" value="EcAspRS_like_N"/>
    <property type="match status" value="1"/>
</dbReference>
<dbReference type="Gene3D" id="3.30.930.10">
    <property type="entry name" value="Bira Bifunctional Protein, Domain 2"/>
    <property type="match status" value="1"/>
</dbReference>
<dbReference type="Gene3D" id="3.30.1360.30">
    <property type="entry name" value="GAD-like domain"/>
    <property type="match status" value="1"/>
</dbReference>
<dbReference type="Gene3D" id="2.40.50.140">
    <property type="entry name" value="Nucleic acid-binding proteins"/>
    <property type="match status" value="1"/>
</dbReference>
<dbReference type="HAMAP" id="MF_00044">
    <property type="entry name" value="Asp_tRNA_synth_type1"/>
    <property type="match status" value="1"/>
</dbReference>
<dbReference type="InterPro" id="IPR004364">
    <property type="entry name" value="Aa-tRNA-synt_II"/>
</dbReference>
<dbReference type="InterPro" id="IPR006195">
    <property type="entry name" value="aa-tRNA-synth_II"/>
</dbReference>
<dbReference type="InterPro" id="IPR045864">
    <property type="entry name" value="aa-tRNA-synth_II/BPL/LPL"/>
</dbReference>
<dbReference type="InterPro" id="IPR004524">
    <property type="entry name" value="Asp-tRNA-ligase_1"/>
</dbReference>
<dbReference type="InterPro" id="IPR047089">
    <property type="entry name" value="Asp-tRNA-ligase_1_N"/>
</dbReference>
<dbReference type="InterPro" id="IPR002312">
    <property type="entry name" value="Asp/Asn-tRNA-synth_IIb"/>
</dbReference>
<dbReference type="InterPro" id="IPR047090">
    <property type="entry name" value="AspRS_core"/>
</dbReference>
<dbReference type="InterPro" id="IPR004115">
    <property type="entry name" value="GAD-like_sf"/>
</dbReference>
<dbReference type="InterPro" id="IPR029351">
    <property type="entry name" value="GAD_dom"/>
</dbReference>
<dbReference type="InterPro" id="IPR012340">
    <property type="entry name" value="NA-bd_OB-fold"/>
</dbReference>
<dbReference type="InterPro" id="IPR004365">
    <property type="entry name" value="NA-bd_OB_tRNA"/>
</dbReference>
<dbReference type="NCBIfam" id="TIGR00459">
    <property type="entry name" value="aspS_bact"/>
    <property type="match status" value="1"/>
</dbReference>
<dbReference type="NCBIfam" id="NF001750">
    <property type="entry name" value="PRK00476.1"/>
    <property type="match status" value="1"/>
</dbReference>
<dbReference type="PANTHER" id="PTHR22594:SF5">
    <property type="entry name" value="ASPARTATE--TRNA LIGASE, MITOCHONDRIAL"/>
    <property type="match status" value="1"/>
</dbReference>
<dbReference type="PANTHER" id="PTHR22594">
    <property type="entry name" value="ASPARTYL/LYSYL-TRNA SYNTHETASE"/>
    <property type="match status" value="1"/>
</dbReference>
<dbReference type="Pfam" id="PF02938">
    <property type="entry name" value="GAD"/>
    <property type="match status" value="1"/>
</dbReference>
<dbReference type="Pfam" id="PF00152">
    <property type="entry name" value="tRNA-synt_2"/>
    <property type="match status" value="1"/>
</dbReference>
<dbReference type="Pfam" id="PF01336">
    <property type="entry name" value="tRNA_anti-codon"/>
    <property type="match status" value="1"/>
</dbReference>
<dbReference type="PRINTS" id="PR01042">
    <property type="entry name" value="TRNASYNTHASP"/>
</dbReference>
<dbReference type="SUPFAM" id="SSF55681">
    <property type="entry name" value="Class II aaRS and biotin synthetases"/>
    <property type="match status" value="1"/>
</dbReference>
<dbReference type="SUPFAM" id="SSF55261">
    <property type="entry name" value="GAD domain-like"/>
    <property type="match status" value="1"/>
</dbReference>
<dbReference type="SUPFAM" id="SSF50249">
    <property type="entry name" value="Nucleic acid-binding proteins"/>
    <property type="match status" value="1"/>
</dbReference>
<dbReference type="PROSITE" id="PS50862">
    <property type="entry name" value="AA_TRNA_LIGASE_II"/>
    <property type="match status" value="1"/>
</dbReference>
<reference key="1">
    <citation type="submission" date="2006-12" db="EMBL/GenBank/DDBJ databases">
        <title>Complete sequence of Chlorobium phaeobacteroides DSM 266.</title>
        <authorList>
            <consortium name="US DOE Joint Genome Institute"/>
            <person name="Copeland A."/>
            <person name="Lucas S."/>
            <person name="Lapidus A."/>
            <person name="Barry K."/>
            <person name="Detter J.C."/>
            <person name="Glavina del Rio T."/>
            <person name="Hammon N."/>
            <person name="Israni S."/>
            <person name="Pitluck S."/>
            <person name="Goltsman E."/>
            <person name="Schmutz J."/>
            <person name="Larimer F."/>
            <person name="Land M."/>
            <person name="Hauser L."/>
            <person name="Mikhailova N."/>
            <person name="Li T."/>
            <person name="Overmann J."/>
            <person name="Bryant D.A."/>
            <person name="Richardson P."/>
        </authorList>
    </citation>
    <scope>NUCLEOTIDE SEQUENCE [LARGE SCALE GENOMIC DNA]</scope>
    <source>
        <strain>DSM 266 / SMG 266 / 2430</strain>
    </source>
</reference>
<protein>
    <recommendedName>
        <fullName evidence="1">Aspartate--tRNA(Asp/Asn) ligase</fullName>
        <ecNumber evidence="1">6.1.1.23</ecNumber>
    </recommendedName>
    <alternativeName>
        <fullName evidence="1">Aspartyl-tRNA synthetase</fullName>
        <shortName evidence="1">AspRS</shortName>
    </alternativeName>
    <alternativeName>
        <fullName evidence="1">Non-discriminating aspartyl-tRNA synthetase</fullName>
        <shortName evidence="1">ND-AspRS</shortName>
    </alternativeName>
</protein>
<keyword id="KW-0030">Aminoacyl-tRNA synthetase</keyword>
<keyword id="KW-0067">ATP-binding</keyword>
<keyword id="KW-0963">Cytoplasm</keyword>
<keyword id="KW-0436">Ligase</keyword>
<keyword id="KW-0547">Nucleotide-binding</keyword>
<keyword id="KW-0648">Protein biosynthesis</keyword>
<keyword id="KW-1185">Reference proteome</keyword>
<comment type="function">
    <text evidence="1">Aspartyl-tRNA synthetase with relaxed tRNA specificity since it is able to aspartylate not only its cognate tRNA(Asp) but also tRNA(Asn). Reaction proceeds in two steps: L-aspartate is first activated by ATP to form Asp-AMP and then transferred to the acceptor end of tRNA(Asp/Asn).</text>
</comment>
<comment type="catalytic activity">
    <reaction evidence="1">
        <text>tRNA(Asx) + L-aspartate + ATP = L-aspartyl-tRNA(Asx) + AMP + diphosphate</text>
        <dbReference type="Rhea" id="RHEA:18349"/>
        <dbReference type="Rhea" id="RHEA-COMP:9710"/>
        <dbReference type="Rhea" id="RHEA-COMP:9711"/>
        <dbReference type="ChEBI" id="CHEBI:29991"/>
        <dbReference type="ChEBI" id="CHEBI:30616"/>
        <dbReference type="ChEBI" id="CHEBI:33019"/>
        <dbReference type="ChEBI" id="CHEBI:78442"/>
        <dbReference type="ChEBI" id="CHEBI:78516"/>
        <dbReference type="ChEBI" id="CHEBI:456215"/>
        <dbReference type="EC" id="6.1.1.23"/>
    </reaction>
</comment>
<comment type="subunit">
    <text evidence="1">Homodimer.</text>
</comment>
<comment type="subcellular location">
    <subcellularLocation>
        <location evidence="1">Cytoplasm</location>
    </subcellularLocation>
</comment>
<comment type="similarity">
    <text evidence="1">Belongs to the class-II aminoacyl-tRNA synthetase family. Type 1 subfamily.</text>
</comment>
<gene>
    <name evidence="1" type="primary">aspS</name>
    <name type="ordered locus">Cpha266_1650</name>
</gene>
<accession>A1BGZ4</accession>